<dbReference type="EC" id="6.3.2.-" evidence="1"/>
<dbReference type="EMBL" id="CP000946">
    <property type="protein sequence ID" value="ACA78372.1"/>
    <property type="molecule type" value="Genomic_DNA"/>
</dbReference>
<dbReference type="RefSeq" id="WP_000684321.1">
    <property type="nucleotide sequence ID" value="NZ_MTFT01000046.1"/>
</dbReference>
<dbReference type="SMR" id="B1IWS0"/>
<dbReference type="GeneID" id="93776570"/>
<dbReference type="KEGG" id="ecl:EcolC_2744"/>
<dbReference type="HOGENOM" id="CLU_054353_0_1_6"/>
<dbReference type="GO" id="GO:0005737">
    <property type="term" value="C:cytoplasm"/>
    <property type="evidence" value="ECO:0007669"/>
    <property type="project" value="TreeGrafter"/>
</dbReference>
<dbReference type="GO" id="GO:0005524">
    <property type="term" value="F:ATP binding"/>
    <property type="evidence" value="ECO:0007669"/>
    <property type="project" value="UniProtKB-UniRule"/>
</dbReference>
<dbReference type="GO" id="GO:0046872">
    <property type="term" value="F:metal ion binding"/>
    <property type="evidence" value="ECO:0007669"/>
    <property type="project" value="UniProtKB-KW"/>
</dbReference>
<dbReference type="GO" id="GO:0018169">
    <property type="term" value="F:ribosomal S6-glutamic acid ligase activity"/>
    <property type="evidence" value="ECO:0007669"/>
    <property type="project" value="UniProtKB-UniRule"/>
</dbReference>
<dbReference type="GO" id="GO:0036211">
    <property type="term" value="P:protein modification process"/>
    <property type="evidence" value="ECO:0007669"/>
    <property type="project" value="InterPro"/>
</dbReference>
<dbReference type="GO" id="GO:0009432">
    <property type="term" value="P:SOS response"/>
    <property type="evidence" value="ECO:0007669"/>
    <property type="project" value="TreeGrafter"/>
</dbReference>
<dbReference type="GO" id="GO:0006412">
    <property type="term" value="P:translation"/>
    <property type="evidence" value="ECO:0007669"/>
    <property type="project" value="UniProtKB-KW"/>
</dbReference>
<dbReference type="FunFam" id="3.40.50.20:FF:000004">
    <property type="entry name" value="Probable alpha-L-glutamate ligase"/>
    <property type="match status" value="1"/>
</dbReference>
<dbReference type="FunFam" id="3.30.1490.20:FF:000005">
    <property type="entry name" value="Probable alpha-L-glutamate ligase 1"/>
    <property type="match status" value="1"/>
</dbReference>
<dbReference type="FunFam" id="3.30.470.20:FF:000016">
    <property type="entry name" value="Ribosomal protein S6--L-glutamate ligase"/>
    <property type="match status" value="1"/>
</dbReference>
<dbReference type="Gene3D" id="3.40.50.20">
    <property type="match status" value="1"/>
</dbReference>
<dbReference type="Gene3D" id="3.30.1490.20">
    <property type="entry name" value="ATP-grasp fold, A domain"/>
    <property type="match status" value="1"/>
</dbReference>
<dbReference type="Gene3D" id="3.30.470.20">
    <property type="entry name" value="ATP-grasp fold, B domain"/>
    <property type="match status" value="1"/>
</dbReference>
<dbReference type="HAMAP" id="MF_01552">
    <property type="entry name" value="RimK"/>
    <property type="match status" value="1"/>
</dbReference>
<dbReference type="InterPro" id="IPR011761">
    <property type="entry name" value="ATP-grasp"/>
</dbReference>
<dbReference type="InterPro" id="IPR013651">
    <property type="entry name" value="ATP-grasp_RimK-type"/>
</dbReference>
<dbReference type="InterPro" id="IPR013815">
    <property type="entry name" value="ATP_grasp_subdomain_1"/>
</dbReference>
<dbReference type="InterPro" id="IPR023533">
    <property type="entry name" value="RimK"/>
</dbReference>
<dbReference type="InterPro" id="IPR041107">
    <property type="entry name" value="Rimk_N"/>
</dbReference>
<dbReference type="InterPro" id="IPR004666">
    <property type="entry name" value="Rp_bS6_RimK/Lys_biosynth_LsyX"/>
</dbReference>
<dbReference type="NCBIfam" id="NF007764">
    <property type="entry name" value="PRK10446.1"/>
    <property type="match status" value="1"/>
</dbReference>
<dbReference type="NCBIfam" id="TIGR00768">
    <property type="entry name" value="rimK_fam"/>
    <property type="match status" value="1"/>
</dbReference>
<dbReference type="PANTHER" id="PTHR21621:SF7">
    <property type="entry name" value="RIBOSOMAL PROTEIN BS6--L-GLUTAMATE LIGASE"/>
    <property type="match status" value="1"/>
</dbReference>
<dbReference type="PANTHER" id="PTHR21621">
    <property type="entry name" value="RIBOSOMAL PROTEIN S6 MODIFICATION PROTEIN"/>
    <property type="match status" value="1"/>
</dbReference>
<dbReference type="Pfam" id="PF08443">
    <property type="entry name" value="RimK"/>
    <property type="match status" value="1"/>
</dbReference>
<dbReference type="Pfam" id="PF18030">
    <property type="entry name" value="Rimk_N"/>
    <property type="match status" value="1"/>
</dbReference>
<dbReference type="SUPFAM" id="SSF56059">
    <property type="entry name" value="Glutathione synthetase ATP-binding domain-like"/>
    <property type="match status" value="1"/>
</dbReference>
<dbReference type="PROSITE" id="PS50975">
    <property type="entry name" value="ATP_GRASP"/>
    <property type="match status" value="1"/>
</dbReference>
<proteinExistence type="inferred from homology"/>
<organism>
    <name type="scientific">Escherichia coli (strain ATCC 8739 / DSM 1576 / NBRC 3972 / NCIMB 8545 / WDCM 00012 / Crooks)</name>
    <dbReference type="NCBI Taxonomy" id="481805"/>
    <lineage>
        <taxon>Bacteria</taxon>
        <taxon>Pseudomonadati</taxon>
        <taxon>Pseudomonadota</taxon>
        <taxon>Gammaproteobacteria</taxon>
        <taxon>Enterobacterales</taxon>
        <taxon>Enterobacteriaceae</taxon>
        <taxon>Escherichia</taxon>
    </lineage>
</organism>
<comment type="function">
    <text evidence="1">An L-glutamate ligase that catalyzes the ATP-dependent post-translational addition of glutamate residues to the C-terminus of ribosomal protein bS6 (RpsF). Is also able to catalyze the synthesis of poly-alpha-glutamate in vitro, via ATP hydrolysis from unprotected glutamate as substrate. The number of glutamate residues added to either RpsF or to poly-alpha-glutamate changes with pH.</text>
</comment>
<comment type="cofactor">
    <cofactor evidence="1">
        <name>Mg(2+)</name>
        <dbReference type="ChEBI" id="CHEBI:18420"/>
    </cofactor>
    <cofactor evidence="1">
        <name>Mn(2+)</name>
        <dbReference type="ChEBI" id="CHEBI:29035"/>
    </cofactor>
    <text evidence="1">Binds 2 magnesium or manganese ions per subunit.</text>
</comment>
<comment type="similarity">
    <text evidence="1">Belongs to the RimK family.</text>
</comment>
<keyword id="KW-0067">ATP-binding</keyword>
<keyword id="KW-0436">Ligase</keyword>
<keyword id="KW-0460">Magnesium</keyword>
<keyword id="KW-0464">Manganese</keyword>
<keyword id="KW-0479">Metal-binding</keyword>
<keyword id="KW-0547">Nucleotide-binding</keyword>
<keyword id="KW-0648">Protein biosynthesis</keyword>
<gene>
    <name evidence="1" type="primary">rimK</name>
    <name type="ordered locus">EcolC_2744</name>
</gene>
<protein>
    <recommendedName>
        <fullName evidence="1">Ribosomal protein bS6--L-glutamate ligase</fullName>
        <ecNumber evidence="1">6.3.2.-</ecNumber>
    </recommendedName>
    <alternativeName>
        <fullName evidence="1">Poly-alpha-glutamate synthase</fullName>
    </alternativeName>
    <alternativeName>
        <fullName evidence="1">Ribosomal protein bS6 modification protein</fullName>
    </alternativeName>
</protein>
<feature type="chain" id="PRO_1000087745" description="Ribosomal protein bS6--L-glutamate ligase">
    <location>
        <begin position="1"/>
        <end position="300"/>
    </location>
</feature>
<feature type="domain" description="ATP-grasp" evidence="1">
    <location>
        <begin position="104"/>
        <end position="287"/>
    </location>
</feature>
<feature type="binding site" evidence="1">
    <location>
        <position position="141"/>
    </location>
    <ligand>
        <name>ATP</name>
        <dbReference type="ChEBI" id="CHEBI:30616"/>
    </ligand>
</feature>
<feature type="binding site" evidence="1">
    <location>
        <begin position="178"/>
        <end position="179"/>
    </location>
    <ligand>
        <name>ATP</name>
        <dbReference type="ChEBI" id="CHEBI:30616"/>
    </ligand>
</feature>
<feature type="binding site" evidence="1">
    <location>
        <position position="187"/>
    </location>
    <ligand>
        <name>ATP</name>
        <dbReference type="ChEBI" id="CHEBI:30616"/>
    </ligand>
</feature>
<feature type="binding site" evidence="1">
    <location>
        <begin position="211"/>
        <end position="213"/>
    </location>
    <ligand>
        <name>ATP</name>
        <dbReference type="ChEBI" id="CHEBI:30616"/>
    </ligand>
</feature>
<feature type="binding site" evidence="1">
    <location>
        <position position="248"/>
    </location>
    <ligand>
        <name>Mg(2+)</name>
        <dbReference type="ChEBI" id="CHEBI:18420"/>
        <label>1</label>
    </ligand>
</feature>
<feature type="binding site" evidence="1">
    <location>
        <position position="248"/>
    </location>
    <ligand>
        <name>Mn(2+)</name>
        <dbReference type="ChEBI" id="CHEBI:29035"/>
        <label>1</label>
    </ligand>
</feature>
<feature type="binding site" evidence="1">
    <location>
        <position position="260"/>
    </location>
    <ligand>
        <name>Mg(2+)</name>
        <dbReference type="ChEBI" id="CHEBI:18420"/>
        <label>1</label>
    </ligand>
</feature>
<feature type="binding site" evidence="1">
    <location>
        <position position="260"/>
    </location>
    <ligand>
        <name>Mg(2+)</name>
        <dbReference type="ChEBI" id="CHEBI:18420"/>
        <label>2</label>
    </ligand>
</feature>
<feature type="binding site" evidence="1">
    <location>
        <position position="260"/>
    </location>
    <ligand>
        <name>Mn(2+)</name>
        <dbReference type="ChEBI" id="CHEBI:29035"/>
        <label>1</label>
    </ligand>
</feature>
<feature type="binding site" evidence="1">
    <location>
        <position position="260"/>
    </location>
    <ligand>
        <name>Mn(2+)</name>
        <dbReference type="ChEBI" id="CHEBI:29035"/>
        <label>2</label>
    </ligand>
</feature>
<feature type="binding site" evidence="1">
    <location>
        <position position="262"/>
    </location>
    <ligand>
        <name>Mg(2+)</name>
        <dbReference type="ChEBI" id="CHEBI:18420"/>
        <label>2</label>
    </ligand>
</feature>
<feature type="binding site" evidence="1">
    <location>
        <position position="262"/>
    </location>
    <ligand>
        <name>Mn(2+)</name>
        <dbReference type="ChEBI" id="CHEBI:29035"/>
        <label>2</label>
    </ligand>
</feature>
<name>RIMK_ECOLC</name>
<sequence>MKIAILSRDGTLYSCKRLREAAIQRGHLVEILDPLSCYMNINPAASSIHYKGRKLPHFDAVIPRIGTAITFYGTAALRQFEMLGSYPLNESVAIARARDKLRSMQLLARQGIDLPVTGIAHSPDDTSDLIDMVGGAPLVVKLVEGTQGIGVVLAETRQAAESVIDAFRGLNAHILVQEYIKEAQGCDIRCLVVGDEVVAAIERRAKEGDFRSNLHRGGAASVASITPQEREIAIKAARTMALDVAGVDILRANRGPLVMEVNASPGLEGIEKTTGIDIAGKMIRWIERHATTEYCLKTGG</sequence>
<evidence type="ECO:0000255" key="1">
    <source>
        <dbReference type="HAMAP-Rule" id="MF_01552"/>
    </source>
</evidence>
<accession>B1IWS0</accession>
<reference key="1">
    <citation type="submission" date="2008-02" db="EMBL/GenBank/DDBJ databases">
        <title>Complete sequence of Escherichia coli C str. ATCC 8739.</title>
        <authorList>
            <person name="Copeland A."/>
            <person name="Lucas S."/>
            <person name="Lapidus A."/>
            <person name="Glavina del Rio T."/>
            <person name="Dalin E."/>
            <person name="Tice H."/>
            <person name="Bruce D."/>
            <person name="Goodwin L."/>
            <person name="Pitluck S."/>
            <person name="Kiss H."/>
            <person name="Brettin T."/>
            <person name="Detter J.C."/>
            <person name="Han C."/>
            <person name="Kuske C.R."/>
            <person name="Schmutz J."/>
            <person name="Larimer F."/>
            <person name="Land M."/>
            <person name="Hauser L."/>
            <person name="Kyrpides N."/>
            <person name="Mikhailova N."/>
            <person name="Ingram L."/>
            <person name="Richardson P."/>
        </authorList>
    </citation>
    <scope>NUCLEOTIDE SEQUENCE [LARGE SCALE GENOMIC DNA]</scope>
    <source>
        <strain>ATCC 8739 / DSM 1576 / NBRC 3972 / NCIMB 8545 / WDCM 00012 / Crooks</strain>
    </source>
</reference>